<reference key="1">
    <citation type="journal article" date="2005" name="J. Bacteriol.">
        <title>Whole-genome sequencing of Staphylococcus haemolyticus uncovers the extreme plasticity of its genome and the evolution of human-colonizing staphylococcal species.</title>
        <authorList>
            <person name="Takeuchi F."/>
            <person name="Watanabe S."/>
            <person name="Baba T."/>
            <person name="Yuzawa H."/>
            <person name="Ito T."/>
            <person name="Morimoto Y."/>
            <person name="Kuroda M."/>
            <person name="Cui L."/>
            <person name="Takahashi M."/>
            <person name="Ankai A."/>
            <person name="Baba S."/>
            <person name="Fukui S."/>
            <person name="Lee J.C."/>
            <person name="Hiramatsu K."/>
        </authorList>
    </citation>
    <scope>NUCLEOTIDE SEQUENCE [LARGE SCALE GENOMIC DNA]</scope>
    <source>
        <strain>JCSC1435</strain>
    </source>
</reference>
<protein>
    <recommendedName>
        <fullName>Uncharacterized protein SH1689</fullName>
    </recommendedName>
</protein>
<sequence>MISKINGKLFADMIIQGAQNLSNNADLVDSLNVYPVPDGDTGTNMNLTITSGREEVENNLSQSIGELGKTFSKGLLMGARGNSGVILSQLFRGFCKNIETENEINAQQLASSFQAGVDTAYKAVMKPVEGTILTVAKDAAKAAVNKAEETDDCVEVMEYTIAEAEKSLNNTPNLLAVLKEVGVVDSGGKGLLCVYEGFLKGLTGQTIEAKKEKLNTEELVHEEHDFHGVINTEDIKYGYCTEMMVRFGKDKRAFDEQTFRTDMSQFGDSLLVINDDEIVKVHVHTETPGEVFNYGQEYGELIKLKVENMREQHREVIRKEKLNHHSDEQEESKTVETAIIAISMGDGISELFTSMGATHIISGGQTMNPSTEDIVKVIEQSQCKRAIILPNNKNIRMSSDQAATLVEADTVVIPTTSIPKGIAALFQYDPSSSLEDNHSHMTTALESVKSGSVTFAVRDTKIDGVEIKKGEFMGLSESKIVTSNDDEFVTVTGLLKSMLNEDSEILTIIAGEDANDDISDKLVEWVESEYPDVEVEEHNGGQPIYQYLFSVE</sequence>
<feature type="chain" id="PRO_0000304166" description="Uncharacterized protein SH1689">
    <location>
        <begin position="1"/>
        <end position="552"/>
    </location>
</feature>
<feature type="domain" description="DhaL" evidence="1">
    <location>
        <begin position="8"/>
        <end position="200"/>
    </location>
</feature>
<gene>
    <name type="ordered locus">SH1689</name>
</gene>
<dbReference type="EMBL" id="AP006716">
    <property type="protein sequence ID" value="BAE04998.1"/>
    <property type="molecule type" value="Genomic_DNA"/>
</dbReference>
<dbReference type="SMR" id="Q4L5S7"/>
<dbReference type="KEGG" id="sha:SH1689"/>
<dbReference type="eggNOG" id="COG1461">
    <property type="taxonomic scope" value="Bacteria"/>
</dbReference>
<dbReference type="HOGENOM" id="CLU_017496_1_0_9"/>
<dbReference type="OrthoDB" id="9760324at2"/>
<dbReference type="Proteomes" id="UP000000543">
    <property type="component" value="Chromosome"/>
</dbReference>
<dbReference type="GO" id="GO:0004371">
    <property type="term" value="F:glycerone kinase activity"/>
    <property type="evidence" value="ECO:0007669"/>
    <property type="project" value="InterPro"/>
</dbReference>
<dbReference type="GO" id="GO:0006071">
    <property type="term" value="P:glycerol metabolic process"/>
    <property type="evidence" value="ECO:0007669"/>
    <property type="project" value="InterPro"/>
</dbReference>
<dbReference type="Gene3D" id="1.25.40.340">
    <property type="match status" value="1"/>
</dbReference>
<dbReference type="InterPro" id="IPR050270">
    <property type="entry name" value="DegV_domain_contain"/>
</dbReference>
<dbReference type="InterPro" id="IPR004007">
    <property type="entry name" value="DhaL_dom"/>
</dbReference>
<dbReference type="InterPro" id="IPR036117">
    <property type="entry name" value="DhaL_dom_sf"/>
</dbReference>
<dbReference type="InterPro" id="IPR033470">
    <property type="entry name" value="FakA-like_C"/>
</dbReference>
<dbReference type="InterPro" id="IPR048394">
    <property type="entry name" value="FakA-like_M"/>
</dbReference>
<dbReference type="InterPro" id="IPR019986">
    <property type="entry name" value="YloV-like"/>
</dbReference>
<dbReference type="NCBIfam" id="NF038248">
    <property type="entry name" value="FakA_VfrB"/>
    <property type="match status" value="1"/>
</dbReference>
<dbReference type="NCBIfam" id="TIGR03599">
    <property type="entry name" value="YloV"/>
    <property type="match status" value="1"/>
</dbReference>
<dbReference type="PANTHER" id="PTHR33434">
    <property type="entry name" value="DEGV DOMAIN-CONTAINING PROTEIN DR_1986-RELATED"/>
    <property type="match status" value="1"/>
</dbReference>
<dbReference type="PANTHER" id="PTHR33434:SF4">
    <property type="entry name" value="PHOSPHATASE PROTEIN"/>
    <property type="match status" value="1"/>
</dbReference>
<dbReference type="Pfam" id="PF02734">
    <property type="entry name" value="Dak2"/>
    <property type="match status" value="1"/>
</dbReference>
<dbReference type="Pfam" id="PF13684">
    <property type="entry name" value="FakA-like_C"/>
    <property type="match status" value="1"/>
</dbReference>
<dbReference type="Pfam" id="PF21645">
    <property type="entry name" value="FakA-like_M"/>
    <property type="match status" value="1"/>
</dbReference>
<dbReference type="SMART" id="SM01121">
    <property type="entry name" value="Dak1_2"/>
    <property type="match status" value="1"/>
</dbReference>
<dbReference type="SMART" id="SM01120">
    <property type="entry name" value="Dak2"/>
    <property type="match status" value="1"/>
</dbReference>
<dbReference type="SUPFAM" id="SSF101473">
    <property type="entry name" value="DhaL-like"/>
    <property type="match status" value="1"/>
</dbReference>
<dbReference type="PROSITE" id="PS51480">
    <property type="entry name" value="DHAL"/>
    <property type="match status" value="1"/>
</dbReference>
<proteinExistence type="predicted"/>
<accession>Q4L5S7</accession>
<organism>
    <name type="scientific">Staphylococcus haemolyticus (strain JCSC1435)</name>
    <dbReference type="NCBI Taxonomy" id="279808"/>
    <lineage>
        <taxon>Bacteria</taxon>
        <taxon>Bacillati</taxon>
        <taxon>Bacillota</taxon>
        <taxon>Bacilli</taxon>
        <taxon>Bacillales</taxon>
        <taxon>Staphylococcaceae</taxon>
        <taxon>Staphylococcus</taxon>
    </lineage>
</organism>
<name>Y1689_STAHJ</name>
<evidence type="ECO:0000255" key="1">
    <source>
        <dbReference type="PROSITE-ProRule" id="PRU00813"/>
    </source>
</evidence>